<evidence type="ECO:0000255" key="1">
    <source>
        <dbReference type="HAMAP-Rule" id="MF_01694"/>
    </source>
</evidence>
<evidence type="ECO:0000255" key="2">
    <source>
        <dbReference type="PROSITE-ProRule" id="PRU01266"/>
    </source>
</evidence>
<dbReference type="EC" id="2.8.1.6" evidence="1"/>
<dbReference type="EMBL" id="AE014292">
    <property type="protein sequence ID" value="AAN33684.1"/>
    <property type="molecule type" value="Genomic_DNA"/>
</dbReference>
<dbReference type="EMBL" id="CP002998">
    <property type="protein sequence ID" value="AEM19962.1"/>
    <property type="molecule type" value="Genomic_DNA"/>
</dbReference>
<dbReference type="SMR" id="Q8FWG3"/>
<dbReference type="KEGG" id="bms:BRA0492"/>
<dbReference type="KEGG" id="bsi:BS1330_II0488"/>
<dbReference type="HOGENOM" id="CLU_033172_1_2_5"/>
<dbReference type="UniPathway" id="UPA00078">
    <property type="reaction ID" value="UER00162"/>
</dbReference>
<dbReference type="Proteomes" id="UP000007104">
    <property type="component" value="Chromosome II"/>
</dbReference>
<dbReference type="GO" id="GO:0051537">
    <property type="term" value="F:2 iron, 2 sulfur cluster binding"/>
    <property type="evidence" value="ECO:0007669"/>
    <property type="project" value="UniProtKB-KW"/>
</dbReference>
<dbReference type="GO" id="GO:0051539">
    <property type="term" value="F:4 iron, 4 sulfur cluster binding"/>
    <property type="evidence" value="ECO:0007669"/>
    <property type="project" value="UniProtKB-KW"/>
</dbReference>
<dbReference type="GO" id="GO:0004076">
    <property type="term" value="F:biotin synthase activity"/>
    <property type="evidence" value="ECO:0007669"/>
    <property type="project" value="UniProtKB-UniRule"/>
</dbReference>
<dbReference type="GO" id="GO:0005506">
    <property type="term" value="F:iron ion binding"/>
    <property type="evidence" value="ECO:0007669"/>
    <property type="project" value="UniProtKB-UniRule"/>
</dbReference>
<dbReference type="GO" id="GO:0009102">
    <property type="term" value="P:biotin biosynthetic process"/>
    <property type="evidence" value="ECO:0007669"/>
    <property type="project" value="UniProtKB-UniRule"/>
</dbReference>
<dbReference type="CDD" id="cd01335">
    <property type="entry name" value="Radical_SAM"/>
    <property type="match status" value="1"/>
</dbReference>
<dbReference type="Gene3D" id="3.20.20.70">
    <property type="entry name" value="Aldolase class I"/>
    <property type="match status" value="1"/>
</dbReference>
<dbReference type="HAMAP" id="MF_01694">
    <property type="entry name" value="BioB"/>
    <property type="match status" value="1"/>
</dbReference>
<dbReference type="InterPro" id="IPR013785">
    <property type="entry name" value="Aldolase_TIM"/>
</dbReference>
<dbReference type="InterPro" id="IPR010722">
    <property type="entry name" value="BATS_dom"/>
</dbReference>
<dbReference type="InterPro" id="IPR002684">
    <property type="entry name" value="Biotin_synth/BioAB"/>
</dbReference>
<dbReference type="InterPro" id="IPR024177">
    <property type="entry name" value="Biotin_synthase"/>
</dbReference>
<dbReference type="InterPro" id="IPR006638">
    <property type="entry name" value="Elp3/MiaA/NifB-like_rSAM"/>
</dbReference>
<dbReference type="InterPro" id="IPR007197">
    <property type="entry name" value="rSAM"/>
</dbReference>
<dbReference type="NCBIfam" id="TIGR00433">
    <property type="entry name" value="bioB"/>
    <property type="match status" value="1"/>
</dbReference>
<dbReference type="PANTHER" id="PTHR22976">
    <property type="entry name" value="BIOTIN SYNTHASE"/>
    <property type="match status" value="1"/>
</dbReference>
<dbReference type="PANTHER" id="PTHR22976:SF2">
    <property type="entry name" value="BIOTIN SYNTHASE, MITOCHONDRIAL"/>
    <property type="match status" value="1"/>
</dbReference>
<dbReference type="Pfam" id="PF06968">
    <property type="entry name" value="BATS"/>
    <property type="match status" value="1"/>
</dbReference>
<dbReference type="Pfam" id="PF04055">
    <property type="entry name" value="Radical_SAM"/>
    <property type="match status" value="1"/>
</dbReference>
<dbReference type="PIRSF" id="PIRSF001619">
    <property type="entry name" value="Biotin_synth"/>
    <property type="match status" value="1"/>
</dbReference>
<dbReference type="SFLD" id="SFLDF00272">
    <property type="entry name" value="biotin_synthase"/>
    <property type="match status" value="1"/>
</dbReference>
<dbReference type="SFLD" id="SFLDS00029">
    <property type="entry name" value="Radical_SAM"/>
    <property type="match status" value="1"/>
</dbReference>
<dbReference type="SMART" id="SM00876">
    <property type="entry name" value="BATS"/>
    <property type="match status" value="1"/>
</dbReference>
<dbReference type="SMART" id="SM00729">
    <property type="entry name" value="Elp3"/>
    <property type="match status" value="1"/>
</dbReference>
<dbReference type="SUPFAM" id="SSF102114">
    <property type="entry name" value="Radical SAM enzymes"/>
    <property type="match status" value="1"/>
</dbReference>
<dbReference type="PROSITE" id="PS51918">
    <property type="entry name" value="RADICAL_SAM"/>
    <property type="match status" value="1"/>
</dbReference>
<sequence>MPDRGGENGASCSVGRWSAEEARAIYNLPFNDLLFRAHGLHRENFDPNRIQLSKLLNIKTGGCPEDCGYCSQSASAENGLKASKLMEIETVLEEARKAKAAGATRYCMGAAWRSPKDRDMPALTHMIESVKAMGLETCMTLGMLDSDKAEKLADAGLDYYNHNIDTSERFYPAVITTRSFEDRLDTLANVRNAGIKVCSGGILGLGEEAEDRIDMLVTLANLPEPPESVPINMLIPMPGTRLAKAAPVDPLEFVRVVALARILMPKSHVRLTAGRTAMSDEMQALCFFAGANSLFMGDTLLTAANPGDDRDSSLLRRLGIQAETEQPA</sequence>
<reference key="1">
    <citation type="journal article" date="2002" name="Proc. Natl. Acad. Sci. U.S.A.">
        <title>The Brucella suis genome reveals fundamental similarities between animal and plant pathogens and symbionts.</title>
        <authorList>
            <person name="Paulsen I.T."/>
            <person name="Seshadri R."/>
            <person name="Nelson K.E."/>
            <person name="Eisen J.A."/>
            <person name="Heidelberg J.F."/>
            <person name="Read T.D."/>
            <person name="Dodson R.J."/>
            <person name="Umayam L.A."/>
            <person name="Brinkac L.M."/>
            <person name="Beanan M.J."/>
            <person name="Daugherty S.C."/>
            <person name="DeBoy R.T."/>
            <person name="Durkin A.S."/>
            <person name="Kolonay J.F."/>
            <person name="Madupu R."/>
            <person name="Nelson W.C."/>
            <person name="Ayodeji B."/>
            <person name="Kraul M."/>
            <person name="Shetty J."/>
            <person name="Malek J.A."/>
            <person name="Van Aken S.E."/>
            <person name="Riedmuller S."/>
            <person name="Tettelin H."/>
            <person name="Gill S.R."/>
            <person name="White O."/>
            <person name="Salzberg S.L."/>
            <person name="Hoover D.L."/>
            <person name="Lindler L.E."/>
            <person name="Halling S.M."/>
            <person name="Boyle S.M."/>
            <person name="Fraser C.M."/>
        </authorList>
    </citation>
    <scope>NUCLEOTIDE SEQUENCE [LARGE SCALE GENOMIC DNA]</scope>
    <source>
        <strain>1330</strain>
    </source>
</reference>
<reference key="2">
    <citation type="journal article" date="2011" name="J. Bacteriol.">
        <title>Revised genome sequence of Brucella suis 1330.</title>
        <authorList>
            <person name="Tae H."/>
            <person name="Shallom S."/>
            <person name="Settlage R."/>
            <person name="Preston D."/>
            <person name="Adams L.G."/>
            <person name="Garner H.R."/>
        </authorList>
    </citation>
    <scope>NUCLEOTIDE SEQUENCE [LARGE SCALE GENOMIC DNA]</scope>
    <source>
        <strain>1330</strain>
    </source>
</reference>
<organism>
    <name type="scientific">Brucella suis biovar 1 (strain 1330)</name>
    <dbReference type="NCBI Taxonomy" id="204722"/>
    <lineage>
        <taxon>Bacteria</taxon>
        <taxon>Pseudomonadati</taxon>
        <taxon>Pseudomonadota</taxon>
        <taxon>Alphaproteobacteria</taxon>
        <taxon>Hyphomicrobiales</taxon>
        <taxon>Brucellaceae</taxon>
        <taxon>Brucella/Ochrobactrum group</taxon>
        <taxon>Brucella</taxon>
    </lineage>
</organism>
<feature type="chain" id="PRO_0000381255" description="Biotin synthase">
    <location>
        <begin position="1"/>
        <end position="328"/>
    </location>
</feature>
<feature type="domain" description="Radical SAM core" evidence="2">
    <location>
        <begin position="48"/>
        <end position="275"/>
    </location>
</feature>
<feature type="binding site" evidence="1">
    <location>
        <position position="63"/>
    </location>
    <ligand>
        <name>[4Fe-4S] cluster</name>
        <dbReference type="ChEBI" id="CHEBI:49883"/>
        <note>4Fe-4S-S-AdoMet</note>
    </ligand>
</feature>
<feature type="binding site" evidence="1">
    <location>
        <position position="67"/>
    </location>
    <ligand>
        <name>[4Fe-4S] cluster</name>
        <dbReference type="ChEBI" id="CHEBI:49883"/>
        <note>4Fe-4S-S-AdoMet</note>
    </ligand>
</feature>
<feature type="binding site" evidence="1">
    <location>
        <position position="70"/>
    </location>
    <ligand>
        <name>[4Fe-4S] cluster</name>
        <dbReference type="ChEBI" id="CHEBI:49883"/>
        <note>4Fe-4S-S-AdoMet</note>
    </ligand>
</feature>
<feature type="binding site" evidence="1">
    <location>
        <position position="107"/>
    </location>
    <ligand>
        <name>[2Fe-2S] cluster</name>
        <dbReference type="ChEBI" id="CHEBI:190135"/>
    </ligand>
</feature>
<feature type="binding site" evidence="1">
    <location>
        <position position="138"/>
    </location>
    <ligand>
        <name>[2Fe-2S] cluster</name>
        <dbReference type="ChEBI" id="CHEBI:190135"/>
    </ligand>
</feature>
<feature type="binding site" evidence="1">
    <location>
        <position position="198"/>
    </location>
    <ligand>
        <name>[2Fe-2S] cluster</name>
        <dbReference type="ChEBI" id="CHEBI:190135"/>
    </ligand>
</feature>
<feature type="binding site" evidence="1">
    <location>
        <position position="270"/>
    </location>
    <ligand>
        <name>[2Fe-2S] cluster</name>
        <dbReference type="ChEBI" id="CHEBI:190135"/>
    </ligand>
</feature>
<gene>
    <name evidence="1" type="primary">bioB</name>
    <name type="ordered locus">BRA0492</name>
    <name type="ordered locus">BS1330_II0488</name>
</gene>
<proteinExistence type="inferred from homology"/>
<name>BIOB_BRUSU</name>
<comment type="function">
    <text evidence="1">Catalyzes the conversion of dethiobiotin (DTB) to biotin by the insertion of a sulfur atom into dethiobiotin via a radical-based mechanism.</text>
</comment>
<comment type="catalytic activity">
    <reaction evidence="1">
        <text>(4R,5S)-dethiobiotin + (sulfur carrier)-SH + 2 reduced [2Fe-2S]-[ferredoxin] + 2 S-adenosyl-L-methionine = (sulfur carrier)-H + biotin + 2 5'-deoxyadenosine + 2 L-methionine + 2 oxidized [2Fe-2S]-[ferredoxin]</text>
        <dbReference type="Rhea" id="RHEA:22060"/>
        <dbReference type="Rhea" id="RHEA-COMP:10000"/>
        <dbReference type="Rhea" id="RHEA-COMP:10001"/>
        <dbReference type="Rhea" id="RHEA-COMP:14737"/>
        <dbReference type="Rhea" id="RHEA-COMP:14739"/>
        <dbReference type="ChEBI" id="CHEBI:17319"/>
        <dbReference type="ChEBI" id="CHEBI:29917"/>
        <dbReference type="ChEBI" id="CHEBI:33737"/>
        <dbReference type="ChEBI" id="CHEBI:33738"/>
        <dbReference type="ChEBI" id="CHEBI:57586"/>
        <dbReference type="ChEBI" id="CHEBI:57844"/>
        <dbReference type="ChEBI" id="CHEBI:59789"/>
        <dbReference type="ChEBI" id="CHEBI:64428"/>
        <dbReference type="ChEBI" id="CHEBI:149473"/>
        <dbReference type="EC" id="2.8.1.6"/>
    </reaction>
</comment>
<comment type="cofactor">
    <cofactor evidence="1">
        <name>[4Fe-4S] cluster</name>
        <dbReference type="ChEBI" id="CHEBI:49883"/>
    </cofactor>
    <text evidence="1">Binds 1 [4Fe-4S] cluster. The cluster is coordinated with 3 cysteines and an exchangeable S-adenosyl-L-methionine.</text>
</comment>
<comment type="cofactor">
    <cofactor evidence="1">
        <name>[2Fe-2S] cluster</name>
        <dbReference type="ChEBI" id="CHEBI:190135"/>
    </cofactor>
    <text evidence="1">Binds 1 [2Fe-2S] cluster. The cluster is coordinated with 3 cysteines and 1 arginine.</text>
</comment>
<comment type="pathway">
    <text evidence="1">Cofactor biosynthesis; biotin biosynthesis; biotin from 7,8-diaminononanoate: step 2/2.</text>
</comment>
<comment type="subunit">
    <text evidence="1">Homodimer.</text>
</comment>
<comment type="similarity">
    <text evidence="1">Belongs to the radical SAM superfamily. Biotin synthase family.</text>
</comment>
<accession>Q8FWG3</accession>
<accession>G0KCM4</accession>
<protein>
    <recommendedName>
        <fullName evidence="1">Biotin synthase</fullName>
        <ecNumber evidence="1">2.8.1.6</ecNumber>
    </recommendedName>
</protein>
<keyword id="KW-0001">2Fe-2S</keyword>
<keyword id="KW-0004">4Fe-4S</keyword>
<keyword id="KW-0093">Biotin biosynthesis</keyword>
<keyword id="KW-0408">Iron</keyword>
<keyword id="KW-0411">Iron-sulfur</keyword>
<keyword id="KW-0479">Metal-binding</keyword>
<keyword id="KW-0949">S-adenosyl-L-methionine</keyword>
<keyword id="KW-0808">Transferase</keyword>